<organism>
    <name type="scientific">Bacillus cytotoxicus (strain DSM 22905 / CIP 110041 / 391-98 / NVH 391-98)</name>
    <dbReference type="NCBI Taxonomy" id="315749"/>
    <lineage>
        <taxon>Bacteria</taxon>
        <taxon>Bacillati</taxon>
        <taxon>Bacillota</taxon>
        <taxon>Bacilli</taxon>
        <taxon>Bacillales</taxon>
        <taxon>Bacillaceae</taxon>
        <taxon>Bacillus</taxon>
        <taxon>Bacillus cereus group</taxon>
    </lineage>
</organism>
<accession>A7GK44</accession>
<evidence type="ECO:0000255" key="1">
    <source>
        <dbReference type="HAMAP-Rule" id="MF_00251"/>
    </source>
</evidence>
<evidence type="ECO:0000305" key="2"/>
<reference key="1">
    <citation type="journal article" date="2008" name="Chem. Biol. Interact.">
        <title>Extending the Bacillus cereus group genomics to putative food-borne pathogens of different toxicity.</title>
        <authorList>
            <person name="Lapidus A."/>
            <person name="Goltsman E."/>
            <person name="Auger S."/>
            <person name="Galleron N."/>
            <person name="Segurens B."/>
            <person name="Dossat C."/>
            <person name="Land M.L."/>
            <person name="Broussolle V."/>
            <person name="Brillard J."/>
            <person name="Guinebretiere M.-H."/>
            <person name="Sanchis V."/>
            <person name="Nguen-the C."/>
            <person name="Lereclus D."/>
            <person name="Richardson P."/>
            <person name="Wincker P."/>
            <person name="Weissenbach J."/>
            <person name="Ehrlich S.D."/>
            <person name="Sorokin A."/>
        </authorList>
    </citation>
    <scope>NUCLEOTIDE SEQUENCE [LARGE SCALE GENOMIC DNA]</scope>
    <source>
        <strain>DSM 22905 / CIP 110041 / 391-98 / NVH 391-98</strain>
    </source>
</reference>
<name>RL36_BACCN</name>
<comment type="similarity">
    <text evidence="1">Belongs to the bacterial ribosomal protein bL36 family.</text>
</comment>
<keyword id="KW-0687">Ribonucleoprotein</keyword>
<keyword id="KW-0689">Ribosomal protein</keyword>
<proteinExistence type="inferred from homology"/>
<feature type="chain" id="PRO_1000078462" description="Large ribosomal subunit protein bL36">
    <location>
        <begin position="1"/>
        <end position="37"/>
    </location>
</feature>
<sequence>MKVRPSVKPICEKCKVIRRRGKVMVICENPKHKQKQG</sequence>
<protein>
    <recommendedName>
        <fullName evidence="1">Large ribosomal subunit protein bL36</fullName>
    </recommendedName>
    <alternativeName>
        <fullName evidence="2">50S ribosomal protein L36</fullName>
    </alternativeName>
</protein>
<gene>
    <name evidence="1" type="primary">rpmJ</name>
    <name type="ordered locus">Bcer98_0128</name>
</gene>
<dbReference type="EMBL" id="CP000764">
    <property type="protein sequence ID" value="ABS20502.1"/>
    <property type="molecule type" value="Genomic_DNA"/>
</dbReference>
<dbReference type="RefSeq" id="WP_000868344.1">
    <property type="nucleotide sequence ID" value="NC_009674.1"/>
</dbReference>
<dbReference type="SMR" id="A7GK44"/>
<dbReference type="STRING" id="315749.Bcer98_0128"/>
<dbReference type="GeneID" id="97822099"/>
<dbReference type="KEGG" id="bcy:Bcer98_0128"/>
<dbReference type="eggNOG" id="COG0257">
    <property type="taxonomic scope" value="Bacteria"/>
</dbReference>
<dbReference type="HOGENOM" id="CLU_135723_6_2_9"/>
<dbReference type="OrthoDB" id="9802520at2"/>
<dbReference type="Proteomes" id="UP000002300">
    <property type="component" value="Chromosome"/>
</dbReference>
<dbReference type="GO" id="GO:0005737">
    <property type="term" value="C:cytoplasm"/>
    <property type="evidence" value="ECO:0007669"/>
    <property type="project" value="UniProtKB-ARBA"/>
</dbReference>
<dbReference type="GO" id="GO:1990904">
    <property type="term" value="C:ribonucleoprotein complex"/>
    <property type="evidence" value="ECO:0007669"/>
    <property type="project" value="UniProtKB-KW"/>
</dbReference>
<dbReference type="GO" id="GO:0005840">
    <property type="term" value="C:ribosome"/>
    <property type="evidence" value="ECO:0007669"/>
    <property type="project" value="UniProtKB-KW"/>
</dbReference>
<dbReference type="GO" id="GO:0003735">
    <property type="term" value="F:structural constituent of ribosome"/>
    <property type="evidence" value="ECO:0007669"/>
    <property type="project" value="InterPro"/>
</dbReference>
<dbReference type="GO" id="GO:0006412">
    <property type="term" value="P:translation"/>
    <property type="evidence" value="ECO:0007669"/>
    <property type="project" value="UniProtKB-UniRule"/>
</dbReference>
<dbReference type="HAMAP" id="MF_00251">
    <property type="entry name" value="Ribosomal_bL36"/>
    <property type="match status" value="1"/>
</dbReference>
<dbReference type="InterPro" id="IPR000473">
    <property type="entry name" value="Ribosomal_bL36"/>
</dbReference>
<dbReference type="InterPro" id="IPR035977">
    <property type="entry name" value="Ribosomal_bL36_sp"/>
</dbReference>
<dbReference type="NCBIfam" id="TIGR01022">
    <property type="entry name" value="rpmJ_bact"/>
    <property type="match status" value="1"/>
</dbReference>
<dbReference type="PANTHER" id="PTHR42888">
    <property type="entry name" value="50S RIBOSOMAL PROTEIN L36, CHLOROPLASTIC"/>
    <property type="match status" value="1"/>
</dbReference>
<dbReference type="PANTHER" id="PTHR42888:SF1">
    <property type="entry name" value="LARGE RIBOSOMAL SUBUNIT PROTEIN BL36C"/>
    <property type="match status" value="1"/>
</dbReference>
<dbReference type="Pfam" id="PF00444">
    <property type="entry name" value="Ribosomal_L36"/>
    <property type="match status" value="1"/>
</dbReference>
<dbReference type="SUPFAM" id="SSF57840">
    <property type="entry name" value="Ribosomal protein L36"/>
    <property type="match status" value="1"/>
</dbReference>
<dbReference type="PROSITE" id="PS00828">
    <property type="entry name" value="RIBOSOMAL_L36"/>
    <property type="match status" value="1"/>
</dbReference>